<gene>
    <name evidence="1" type="primary">leuD</name>
    <name type="ordered locus">BMEA_B0862</name>
</gene>
<sequence length="201" mass="22236">MDKFTKLTGVAAPLPIVNIDTDMIIPKDYLKTIKRTGLGKGLFAEMRFNEDGSENPDFVLNKPGYRKAQILVAGDNFGCGSSREHAPWALLDYGIRCVISTSFADIFYNNCFKNGILPIKVAQEDLDKLMDDASRGANATLTIDLETKQIHGPDGGTISFDLDDFKRHCLLNGLDDIGLTMEKAKSIDTFEAKNAEERPWA</sequence>
<keyword id="KW-0028">Amino-acid biosynthesis</keyword>
<keyword id="KW-0100">Branched-chain amino acid biosynthesis</keyword>
<keyword id="KW-0432">Leucine biosynthesis</keyword>
<keyword id="KW-0456">Lyase</keyword>
<comment type="function">
    <text evidence="1">Catalyzes the isomerization between 2-isopropylmalate and 3-isopropylmalate, via the formation of 2-isopropylmaleate.</text>
</comment>
<comment type="catalytic activity">
    <reaction evidence="1">
        <text>(2R,3S)-3-isopropylmalate = (2S)-2-isopropylmalate</text>
        <dbReference type="Rhea" id="RHEA:32287"/>
        <dbReference type="ChEBI" id="CHEBI:1178"/>
        <dbReference type="ChEBI" id="CHEBI:35121"/>
        <dbReference type="EC" id="4.2.1.33"/>
    </reaction>
</comment>
<comment type="pathway">
    <text evidence="1">Amino-acid biosynthesis; L-leucine biosynthesis; L-leucine from 3-methyl-2-oxobutanoate: step 2/4.</text>
</comment>
<comment type="subunit">
    <text evidence="1">Heterodimer of LeuC and LeuD.</text>
</comment>
<comment type="similarity">
    <text evidence="1">Belongs to the LeuD family. LeuD type 1 subfamily.</text>
</comment>
<organism>
    <name type="scientific">Brucella melitensis biotype 2 (strain ATCC 23457)</name>
    <dbReference type="NCBI Taxonomy" id="546272"/>
    <lineage>
        <taxon>Bacteria</taxon>
        <taxon>Pseudomonadati</taxon>
        <taxon>Pseudomonadota</taxon>
        <taxon>Alphaproteobacteria</taxon>
        <taxon>Hyphomicrobiales</taxon>
        <taxon>Brucellaceae</taxon>
        <taxon>Brucella/Ochrobactrum group</taxon>
        <taxon>Brucella</taxon>
    </lineage>
</organism>
<proteinExistence type="inferred from homology"/>
<reference key="1">
    <citation type="submission" date="2009-03" db="EMBL/GenBank/DDBJ databases">
        <title>Brucella melitensis ATCC 23457 whole genome shotgun sequencing project.</title>
        <authorList>
            <person name="Setubal J.C."/>
            <person name="Boyle S."/>
            <person name="Crasta O.R."/>
            <person name="Gillespie J.J."/>
            <person name="Kenyon R.W."/>
            <person name="Lu J."/>
            <person name="Mane S."/>
            <person name="Nagrani S."/>
            <person name="Shallom J.M."/>
            <person name="Shallom S."/>
            <person name="Shukla M."/>
            <person name="Snyder E.E."/>
            <person name="Sobral B.W."/>
            <person name="Wattam A.R."/>
            <person name="Will R."/>
            <person name="Williams K."/>
            <person name="Yoo H."/>
            <person name="Munk C."/>
            <person name="Tapia R."/>
            <person name="Han C."/>
            <person name="Detter J.C."/>
            <person name="Bruce D."/>
            <person name="Brettin T.S."/>
        </authorList>
    </citation>
    <scope>NUCLEOTIDE SEQUENCE [LARGE SCALE GENOMIC DNA]</scope>
    <source>
        <strain>ATCC 23457</strain>
    </source>
</reference>
<accession>C0RM30</accession>
<feature type="chain" id="PRO_1000149406" description="3-isopropylmalate dehydratase small subunit">
    <location>
        <begin position="1"/>
        <end position="201"/>
    </location>
</feature>
<evidence type="ECO:0000255" key="1">
    <source>
        <dbReference type="HAMAP-Rule" id="MF_01031"/>
    </source>
</evidence>
<name>LEUD_BRUMB</name>
<protein>
    <recommendedName>
        <fullName evidence="1">3-isopropylmalate dehydratase small subunit</fullName>
        <ecNumber evidence="1">4.2.1.33</ecNumber>
    </recommendedName>
    <alternativeName>
        <fullName evidence="1">Alpha-IPM isomerase</fullName>
        <shortName evidence="1">IPMI</shortName>
    </alternativeName>
    <alternativeName>
        <fullName evidence="1">Isopropylmalate isomerase</fullName>
    </alternativeName>
</protein>
<dbReference type="EC" id="4.2.1.33" evidence="1"/>
<dbReference type="EMBL" id="CP001489">
    <property type="protein sequence ID" value="ACO02663.1"/>
    <property type="molecule type" value="Genomic_DNA"/>
</dbReference>
<dbReference type="RefSeq" id="WP_002965763.1">
    <property type="nucleotide sequence ID" value="NC_012442.1"/>
</dbReference>
<dbReference type="SMR" id="C0RM30"/>
<dbReference type="GeneID" id="97535045"/>
<dbReference type="KEGG" id="bmi:BMEA_B0862"/>
<dbReference type="HOGENOM" id="CLU_081378_0_3_5"/>
<dbReference type="UniPathway" id="UPA00048">
    <property type="reaction ID" value="UER00071"/>
</dbReference>
<dbReference type="Proteomes" id="UP000001748">
    <property type="component" value="Chromosome II"/>
</dbReference>
<dbReference type="GO" id="GO:0009316">
    <property type="term" value="C:3-isopropylmalate dehydratase complex"/>
    <property type="evidence" value="ECO:0007669"/>
    <property type="project" value="InterPro"/>
</dbReference>
<dbReference type="GO" id="GO:0003861">
    <property type="term" value="F:3-isopropylmalate dehydratase activity"/>
    <property type="evidence" value="ECO:0007669"/>
    <property type="project" value="UniProtKB-UniRule"/>
</dbReference>
<dbReference type="GO" id="GO:0009098">
    <property type="term" value="P:L-leucine biosynthetic process"/>
    <property type="evidence" value="ECO:0007669"/>
    <property type="project" value="UniProtKB-UniRule"/>
</dbReference>
<dbReference type="CDD" id="cd01577">
    <property type="entry name" value="IPMI_Swivel"/>
    <property type="match status" value="1"/>
</dbReference>
<dbReference type="FunFam" id="3.20.19.10:FF:000003">
    <property type="entry name" value="3-isopropylmalate dehydratase small subunit"/>
    <property type="match status" value="1"/>
</dbReference>
<dbReference type="Gene3D" id="3.20.19.10">
    <property type="entry name" value="Aconitase, domain 4"/>
    <property type="match status" value="1"/>
</dbReference>
<dbReference type="HAMAP" id="MF_01031">
    <property type="entry name" value="LeuD_type1"/>
    <property type="match status" value="1"/>
</dbReference>
<dbReference type="InterPro" id="IPR004431">
    <property type="entry name" value="3-IsopropMal_deHydase_ssu"/>
</dbReference>
<dbReference type="InterPro" id="IPR015928">
    <property type="entry name" value="Aconitase/3IPM_dehydase_swvl"/>
</dbReference>
<dbReference type="InterPro" id="IPR000573">
    <property type="entry name" value="AconitaseA/IPMdHydase_ssu_swvl"/>
</dbReference>
<dbReference type="InterPro" id="IPR033940">
    <property type="entry name" value="IPMI_Swivel"/>
</dbReference>
<dbReference type="InterPro" id="IPR050075">
    <property type="entry name" value="LeuD"/>
</dbReference>
<dbReference type="NCBIfam" id="TIGR00171">
    <property type="entry name" value="leuD"/>
    <property type="match status" value="1"/>
</dbReference>
<dbReference type="NCBIfam" id="NF002458">
    <property type="entry name" value="PRK01641.1"/>
    <property type="match status" value="1"/>
</dbReference>
<dbReference type="PANTHER" id="PTHR43345:SF5">
    <property type="entry name" value="3-ISOPROPYLMALATE DEHYDRATASE SMALL SUBUNIT"/>
    <property type="match status" value="1"/>
</dbReference>
<dbReference type="PANTHER" id="PTHR43345">
    <property type="entry name" value="3-ISOPROPYLMALATE DEHYDRATASE SMALL SUBUNIT 2-RELATED-RELATED"/>
    <property type="match status" value="1"/>
</dbReference>
<dbReference type="Pfam" id="PF00694">
    <property type="entry name" value="Aconitase_C"/>
    <property type="match status" value="1"/>
</dbReference>
<dbReference type="SUPFAM" id="SSF52016">
    <property type="entry name" value="LeuD/IlvD-like"/>
    <property type="match status" value="1"/>
</dbReference>